<accession>Q8FIR9</accession>
<feature type="chain" id="PRO_0000173335" description="Multidrug resistance protein MdtG">
    <location>
        <begin position="1"/>
        <end position="408"/>
    </location>
</feature>
<feature type="transmembrane region" description="Helical" evidence="1">
    <location>
        <begin position="16"/>
        <end position="36"/>
    </location>
</feature>
<feature type="transmembrane region" description="Helical" evidence="1">
    <location>
        <begin position="58"/>
        <end position="78"/>
    </location>
</feature>
<feature type="transmembrane region" description="Helical" evidence="1">
    <location>
        <begin position="92"/>
        <end position="112"/>
    </location>
</feature>
<feature type="transmembrane region" description="Helical" evidence="1">
    <location>
        <begin position="115"/>
        <end position="135"/>
    </location>
</feature>
<feature type="transmembrane region" description="Helical" evidence="1">
    <location>
        <begin position="146"/>
        <end position="166"/>
    </location>
</feature>
<feature type="transmembrane region" description="Helical" evidence="1">
    <location>
        <begin position="173"/>
        <end position="193"/>
    </location>
</feature>
<feature type="transmembrane region" description="Helical" evidence="1">
    <location>
        <begin position="224"/>
        <end position="244"/>
    </location>
</feature>
<feature type="transmembrane region" description="Helical" evidence="1">
    <location>
        <begin position="256"/>
        <end position="276"/>
    </location>
</feature>
<feature type="transmembrane region" description="Helical" evidence="1">
    <location>
        <begin position="290"/>
        <end position="310"/>
    </location>
</feature>
<feature type="transmembrane region" description="Helical" evidence="1">
    <location>
        <begin position="319"/>
        <end position="339"/>
    </location>
</feature>
<feature type="transmembrane region" description="Helical" evidence="1">
    <location>
        <begin position="378"/>
        <end position="398"/>
    </location>
</feature>
<dbReference type="EMBL" id="AE014075">
    <property type="protein sequence ID" value="AAN79792.1"/>
    <property type="molecule type" value="Genomic_DNA"/>
</dbReference>
<dbReference type="RefSeq" id="WP_000074159.1">
    <property type="nucleotide sequence ID" value="NZ_CP051263.1"/>
</dbReference>
<dbReference type="SMR" id="Q8FIR9"/>
<dbReference type="STRING" id="199310.c1319"/>
<dbReference type="KEGG" id="ecc:c1319"/>
<dbReference type="eggNOG" id="COG2814">
    <property type="taxonomic scope" value="Bacteria"/>
</dbReference>
<dbReference type="HOGENOM" id="CLU_001265_57_3_6"/>
<dbReference type="BioCyc" id="ECOL199310:C1319-MONOMER"/>
<dbReference type="Proteomes" id="UP000001410">
    <property type="component" value="Chromosome"/>
</dbReference>
<dbReference type="GO" id="GO:0005886">
    <property type="term" value="C:plasma membrane"/>
    <property type="evidence" value="ECO:0007669"/>
    <property type="project" value="UniProtKB-SubCell"/>
</dbReference>
<dbReference type="GO" id="GO:0022857">
    <property type="term" value="F:transmembrane transporter activity"/>
    <property type="evidence" value="ECO:0007669"/>
    <property type="project" value="UniProtKB-UniRule"/>
</dbReference>
<dbReference type="GO" id="GO:0046677">
    <property type="term" value="P:response to antibiotic"/>
    <property type="evidence" value="ECO:0007669"/>
    <property type="project" value="UniProtKB-KW"/>
</dbReference>
<dbReference type="CDD" id="cd17391">
    <property type="entry name" value="MFS_MdtG_MDR_like"/>
    <property type="match status" value="1"/>
</dbReference>
<dbReference type="FunFam" id="1.20.1250.20:FF:000020">
    <property type="entry name" value="Multidrug resistance protein MdtG"/>
    <property type="match status" value="1"/>
</dbReference>
<dbReference type="FunFam" id="1.20.1250.20:FF:000022">
    <property type="entry name" value="Multidrug resistance protein MdtG"/>
    <property type="match status" value="1"/>
</dbReference>
<dbReference type="Gene3D" id="1.20.1250.20">
    <property type="entry name" value="MFS general substrate transporter like domains"/>
    <property type="match status" value="2"/>
</dbReference>
<dbReference type="HAMAP" id="MF_01528">
    <property type="entry name" value="MFS_MdtG"/>
    <property type="match status" value="1"/>
</dbReference>
<dbReference type="InterPro" id="IPR011701">
    <property type="entry name" value="MFS"/>
</dbReference>
<dbReference type="InterPro" id="IPR020846">
    <property type="entry name" value="MFS_dom"/>
</dbReference>
<dbReference type="InterPro" id="IPR050497">
    <property type="entry name" value="MFS_MdtG_subfamily"/>
</dbReference>
<dbReference type="InterPro" id="IPR036259">
    <property type="entry name" value="MFS_trans_sf"/>
</dbReference>
<dbReference type="InterPro" id="IPR023692">
    <property type="entry name" value="Mutidrug-R_MdtG"/>
</dbReference>
<dbReference type="InterPro" id="IPR001958">
    <property type="entry name" value="Tet-R_TetA/multi-R_MdtG-like"/>
</dbReference>
<dbReference type="NCBIfam" id="NF007372">
    <property type="entry name" value="PRK09874.1"/>
    <property type="match status" value="1"/>
</dbReference>
<dbReference type="PANTHER" id="PTHR43414">
    <property type="entry name" value="MULTIDRUG RESISTANCE PROTEIN MDTG"/>
    <property type="match status" value="1"/>
</dbReference>
<dbReference type="PANTHER" id="PTHR43414:SF6">
    <property type="entry name" value="MULTIDRUG RESISTANCE PROTEIN MDTG"/>
    <property type="match status" value="1"/>
</dbReference>
<dbReference type="Pfam" id="PF07690">
    <property type="entry name" value="MFS_1"/>
    <property type="match status" value="1"/>
</dbReference>
<dbReference type="PRINTS" id="PR01035">
    <property type="entry name" value="TCRTETA"/>
</dbReference>
<dbReference type="SUPFAM" id="SSF103473">
    <property type="entry name" value="MFS general substrate transporter"/>
    <property type="match status" value="1"/>
</dbReference>
<dbReference type="PROSITE" id="PS50850">
    <property type="entry name" value="MFS"/>
    <property type="match status" value="1"/>
</dbReference>
<reference key="1">
    <citation type="journal article" date="2002" name="Proc. Natl. Acad. Sci. U.S.A.">
        <title>Extensive mosaic structure revealed by the complete genome sequence of uropathogenic Escherichia coli.</title>
        <authorList>
            <person name="Welch R.A."/>
            <person name="Burland V."/>
            <person name="Plunkett G. III"/>
            <person name="Redford P."/>
            <person name="Roesch P."/>
            <person name="Rasko D."/>
            <person name="Buckles E.L."/>
            <person name="Liou S.-R."/>
            <person name="Boutin A."/>
            <person name="Hackett J."/>
            <person name="Stroud D."/>
            <person name="Mayhew G.F."/>
            <person name="Rose D.J."/>
            <person name="Zhou S."/>
            <person name="Schwartz D.C."/>
            <person name="Perna N.T."/>
            <person name="Mobley H.L.T."/>
            <person name="Donnenberg M.S."/>
            <person name="Blattner F.R."/>
        </authorList>
    </citation>
    <scope>NUCLEOTIDE SEQUENCE [LARGE SCALE GENOMIC DNA]</scope>
    <source>
        <strain>CFT073 / ATCC 700928 / UPEC</strain>
    </source>
</reference>
<comment type="function">
    <text evidence="1">Confers resistance to fosfomycin and deoxycholate.</text>
</comment>
<comment type="subcellular location">
    <subcellularLocation>
        <location evidence="1">Cell inner membrane</location>
        <topology evidence="1">Multi-pass membrane protein</topology>
    </subcellularLocation>
</comment>
<comment type="similarity">
    <text evidence="1">Belongs to the major facilitator superfamily. DHA1 family. MdtG (TC 2.A.1.2.20) subfamily.</text>
</comment>
<gene>
    <name evidence="1" type="primary">mdtG</name>
    <name type="ordered locus">c1319</name>
</gene>
<keyword id="KW-0046">Antibiotic resistance</keyword>
<keyword id="KW-0997">Cell inner membrane</keyword>
<keyword id="KW-1003">Cell membrane</keyword>
<keyword id="KW-0472">Membrane</keyword>
<keyword id="KW-1185">Reference proteome</keyword>
<keyword id="KW-0812">Transmembrane</keyword>
<keyword id="KW-1133">Transmembrane helix</keyword>
<keyword id="KW-0813">Transport</keyword>
<organism>
    <name type="scientific">Escherichia coli O6:H1 (strain CFT073 / ATCC 700928 / UPEC)</name>
    <dbReference type="NCBI Taxonomy" id="199310"/>
    <lineage>
        <taxon>Bacteria</taxon>
        <taxon>Pseudomonadati</taxon>
        <taxon>Pseudomonadota</taxon>
        <taxon>Gammaproteobacteria</taxon>
        <taxon>Enterobacterales</taxon>
        <taxon>Enterobacteriaceae</taxon>
        <taxon>Escherichia</taxon>
    </lineage>
</organism>
<sequence length="408" mass="43881">MSPCENDTPINWKRNLIVAWLGCFLTGAAFSLVMPFLPLYVEQLGVTGHSALNMWSGIVFSITFLFSAIASPFWGGLADRKGRKIMLLRSALGMGIVMVLMGLAQNIWQFLILRALLGLLGGFVPNANALIATQVPRNKSGWALGTLSTGGVSGALLGPMAGGLLADSYGLRPVFFITASVLILCFFVTLFCIREKFQPVSKKEMLHMREVVTSLKNPKLVLSLFVTTLIIQVATGSIAPILTLYVRELAGNVSNVAFISGMIASVPGVAALLSAPRLGKLGDRIGPEKILITALIFSVLLLIPMSYVQTPLQLGILRFLLGAADGALLPAVQTLLVYNSSNQIAGRIFSYNQSFRDIGNVTGPLMGAAISANYGFRAVFLVTAGVVLFNAVYSWNSLRRRRIPQISN</sequence>
<evidence type="ECO:0000255" key="1">
    <source>
        <dbReference type="HAMAP-Rule" id="MF_01528"/>
    </source>
</evidence>
<protein>
    <recommendedName>
        <fullName evidence="1">Multidrug resistance protein MdtG</fullName>
    </recommendedName>
</protein>
<name>MDTG_ECOL6</name>
<proteinExistence type="inferred from homology"/>